<accession>B8EPJ0</accession>
<gene>
    <name evidence="1" type="primary">acsA</name>
    <name type="ordered locus">Msil_1226</name>
</gene>
<reference key="1">
    <citation type="journal article" date="2010" name="J. Bacteriol.">
        <title>Complete genome sequence of the aerobic facultative methanotroph Methylocella silvestris BL2.</title>
        <authorList>
            <person name="Chen Y."/>
            <person name="Crombie A."/>
            <person name="Rahman M.T."/>
            <person name="Dedysh S.N."/>
            <person name="Liesack W."/>
            <person name="Stott M.B."/>
            <person name="Alam M."/>
            <person name="Theisen A.R."/>
            <person name="Murrell J.C."/>
            <person name="Dunfield P.F."/>
        </authorList>
    </citation>
    <scope>NUCLEOTIDE SEQUENCE [LARGE SCALE GENOMIC DNA]</scope>
    <source>
        <strain>DSM 15510 / CIP 108128 / LMG 27833 / NCIMB 13906 / BL2</strain>
    </source>
</reference>
<keyword id="KW-0007">Acetylation</keyword>
<keyword id="KW-0067">ATP-binding</keyword>
<keyword id="KW-0436">Ligase</keyword>
<keyword id="KW-0460">Magnesium</keyword>
<keyword id="KW-0479">Metal-binding</keyword>
<keyword id="KW-0547">Nucleotide-binding</keyword>
<keyword id="KW-1185">Reference proteome</keyword>
<name>ACSA_METSB</name>
<dbReference type="EC" id="6.2.1.1" evidence="1"/>
<dbReference type="EMBL" id="CP001280">
    <property type="protein sequence ID" value="ACK50195.1"/>
    <property type="molecule type" value="Genomic_DNA"/>
</dbReference>
<dbReference type="RefSeq" id="WP_012590265.1">
    <property type="nucleotide sequence ID" value="NC_011666.1"/>
</dbReference>
<dbReference type="SMR" id="B8EPJ0"/>
<dbReference type="STRING" id="395965.Msil_1226"/>
<dbReference type="KEGG" id="msl:Msil_1226"/>
<dbReference type="eggNOG" id="COG0365">
    <property type="taxonomic scope" value="Bacteria"/>
</dbReference>
<dbReference type="HOGENOM" id="CLU_000022_3_6_5"/>
<dbReference type="OrthoDB" id="9803968at2"/>
<dbReference type="Proteomes" id="UP000002257">
    <property type="component" value="Chromosome"/>
</dbReference>
<dbReference type="GO" id="GO:0005829">
    <property type="term" value="C:cytosol"/>
    <property type="evidence" value="ECO:0007669"/>
    <property type="project" value="TreeGrafter"/>
</dbReference>
<dbReference type="GO" id="GO:0003987">
    <property type="term" value="F:acetate-CoA ligase activity"/>
    <property type="evidence" value="ECO:0007669"/>
    <property type="project" value="UniProtKB-UniRule"/>
</dbReference>
<dbReference type="GO" id="GO:0016208">
    <property type="term" value="F:AMP binding"/>
    <property type="evidence" value="ECO:0007669"/>
    <property type="project" value="InterPro"/>
</dbReference>
<dbReference type="GO" id="GO:0005524">
    <property type="term" value="F:ATP binding"/>
    <property type="evidence" value="ECO:0007669"/>
    <property type="project" value="UniProtKB-KW"/>
</dbReference>
<dbReference type="GO" id="GO:0046872">
    <property type="term" value="F:metal ion binding"/>
    <property type="evidence" value="ECO:0007669"/>
    <property type="project" value="UniProtKB-KW"/>
</dbReference>
<dbReference type="GO" id="GO:0019427">
    <property type="term" value="P:acetyl-CoA biosynthetic process from acetate"/>
    <property type="evidence" value="ECO:0007669"/>
    <property type="project" value="InterPro"/>
</dbReference>
<dbReference type="CDD" id="cd05966">
    <property type="entry name" value="ACS"/>
    <property type="match status" value="1"/>
</dbReference>
<dbReference type="FunFam" id="3.30.300.30:FF:000004">
    <property type="entry name" value="Acetyl-coenzyme A synthetase"/>
    <property type="match status" value="1"/>
</dbReference>
<dbReference type="FunFam" id="3.40.50.12780:FF:000001">
    <property type="entry name" value="Acetyl-coenzyme A synthetase"/>
    <property type="match status" value="1"/>
</dbReference>
<dbReference type="Gene3D" id="3.30.300.30">
    <property type="match status" value="1"/>
</dbReference>
<dbReference type="Gene3D" id="3.40.50.12780">
    <property type="entry name" value="N-terminal domain of ligase-like"/>
    <property type="match status" value="1"/>
</dbReference>
<dbReference type="HAMAP" id="MF_01123">
    <property type="entry name" value="Ac_CoA_synth"/>
    <property type="match status" value="1"/>
</dbReference>
<dbReference type="InterPro" id="IPR011904">
    <property type="entry name" value="Ac_CoA_lig"/>
</dbReference>
<dbReference type="InterPro" id="IPR032387">
    <property type="entry name" value="ACAS_N"/>
</dbReference>
<dbReference type="InterPro" id="IPR025110">
    <property type="entry name" value="AMP-bd_C"/>
</dbReference>
<dbReference type="InterPro" id="IPR045851">
    <property type="entry name" value="AMP-bd_C_sf"/>
</dbReference>
<dbReference type="InterPro" id="IPR020845">
    <property type="entry name" value="AMP-binding_CS"/>
</dbReference>
<dbReference type="InterPro" id="IPR000873">
    <property type="entry name" value="AMP-dep_synth/lig_dom"/>
</dbReference>
<dbReference type="InterPro" id="IPR042099">
    <property type="entry name" value="ANL_N_sf"/>
</dbReference>
<dbReference type="NCBIfam" id="TIGR02188">
    <property type="entry name" value="Ac_CoA_lig_AcsA"/>
    <property type="match status" value="1"/>
</dbReference>
<dbReference type="NCBIfam" id="NF001208">
    <property type="entry name" value="PRK00174.1"/>
    <property type="match status" value="1"/>
</dbReference>
<dbReference type="PANTHER" id="PTHR24095">
    <property type="entry name" value="ACETYL-COENZYME A SYNTHETASE"/>
    <property type="match status" value="1"/>
</dbReference>
<dbReference type="PANTHER" id="PTHR24095:SF243">
    <property type="entry name" value="ACETYL-COENZYME A SYNTHETASE"/>
    <property type="match status" value="1"/>
</dbReference>
<dbReference type="Pfam" id="PF16177">
    <property type="entry name" value="ACAS_N"/>
    <property type="match status" value="1"/>
</dbReference>
<dbReference type="Pfam" id="PF00501">
    <property type="entry name" value="AMP-binding"/>
    <property type="match status" value="1"/>
</dbReference>
<dbReference type="Pfam" id="PF13193">
    <property type="entry name" value="AMP-binding_C"/>
    <property type="match status" value="1"/>
</dbReference>
<dbReference type="SUPFAM" id="SSF56801">
    <property type="entry name" value="Acetyl-CoA synthetase-like"/>
    <property type="match status" value="1"/>
</dbReference>
<dbReference type="PROSITE" id="PS00455">
    <property type="entry name" value="AMP_BINDING"/>
    <property type="match status" value="1"/>
</dbReference>
<organism>
    <name type="scientific">Methylocella silvestris (strain DSM 15510 / CIP 108128 / LMG 27833 / NCIMB 13906 / BL2)</name>
    <dbReference type="NCBI Taxonomy" id="395965"/>
    <lineage>
        <taxon>Bacteria</taxon>
        <taxon>Pseudomonadati</taxon>
        <taxon>Pseudomonadota</taxon>
        <taxon>Alphaproteobacteria</taxon>
        <taxon>Hyphomicrobiales</taxon>
        <taxon>Beijerinckiaceae</taxon>
        <taxon>Methylocella</taxon>
    </lineage>
</organism>
<evidence type="ECO:0000255" key="1">
    <source>
        <dbReference type="HAMAP-Rule" id="MF_01123"/>
    </source>
</evidence>
<comment type="function">
    <text evidence="1">Catalyzes the conversion of acetate into acetyl-CoA (AcCoA), an essential intermediate at the junction of anabolic and catabolic pathways. AcsA undergoes a two-step reaction. In the first half reaction, AcsA combines acetate with ATP to form acetyl-adenylate (AcAMP) intermediate. In the second half reaction, it can then transfer the acetyl group from AcAMP to the sulfhydryl group of CoA, forming the product AcCoA.</text>
</comment>
<comment type="catalytic activity">
    <reaction evidence="1">
        <text>acetate + ATP + CoA = acetyl-CoA + AMP + diphosphate</text>
        <dbReference type="Rhea" id="RHEA:23176"/>
        <dbReference type="ChEBI" id="CHEBI:30089"/>
        <dbReference type="ChEBI" id="CHEBI:30616"/>
        <dbReference type="ChEBI" id="CHEBI:33019"/>
        <dbReference type="ChEBI" id="CHEBI:57287"/>
        <dbReference type="ChEBI" id="CHEBI:57288"/>
        <dbReference type="ChEBI" id="CHEBI:456215"/>
        <dbReference type="EC" id="6.2.1.1"/>
    </reaction>
</comment>
<comment type="cofactor">
    <cofactor evidence="1">
        <name>Mg(2+)</name>
        <dbReference type="ChEBI" id="CHEBI:18420"/>
    </cofactor>
</comment>
<comment type="PTM">
    <text evidence="1">Acetylated. Deacetylation by the SIR2-homolog deacetylase activates the enzyme.</text>
</comment>
<comment type="similarity">
    <text evidence="1">Belongs to the ATP-dependent AMP-binding enzyme family.</text>
</comment>
<feature type="chain" id="PRO_1000164051" description="Acetyl-coenzyme A synthetase">
    <location>
        <begin position="1"/>
        <end position="645"/>
    </location>
</feature>
<feature type="binding site" evidence="1">
    <location>
        <begin position="190"/>
        <end position="193"/>
    </location>
    <ligand>
        <name>CoA</name>
        <dbReference type="ChEBI" id="CHEBI:57287"/>
    </ligand>
</feature>
<feature type="binding site" evidence="1">
    <location>
        <position position="309"/>
    </location>
    <ligand>
        <name>CoA</name>
        <dbReference type="ChEBI" id="CHEBI:57287"/>
    </ligand>
</feature>
<feature type="binding site" evidence="1">
    <location>
        <begin position="385"/>
        <end position="387"/>
    </location>
    <ligand>
        <name>ATP</name>
        <dbReference type="ChEBI" id="CHEBI:30616"/>
    </ligand>
</feature>
<feature type="binding site" evidence="1">
    <location>
        <begin position="409"/>
        <end position="414"/>
    </location>
    <ligand>
        <name>ATP</name>
        <dbReference type="ChEBI" id="CHEBI:30616"/>
    </ligand>
</feature>
<feature type="binding site" evidence="1">
    <location>
        <position position="498"/>
    </location>
    <ligand>
        <name>ATP</name>
        <dbReference type="ChEBI" id="CHEBI:30616"/>
    </ligand>
</feature>
<feature type="binding site" evidence="1">
    <location>
        <position position="513"/>
    </location>
    <ligand>
        <name>ATP</name>
        <dbReference type="ChEBI" id="CHEBI:30616"/>
    </ligand>
</feature>
<feature type="binding site" evidence="1">
    <location>
        <position position="521"/>
    </location>
    <ligand>
        <name>CoA</name>
        <dbReference type="ChEBI" id="CHEBI:57287"/>
    </ligand>
</feature>
<feature type="binding site" evidence="1">
    <location>
        <position position="524"/>
    </location>
    <ligand>
        <name>ATP</name>
        <dbReference type="ChEBI" id="CHEBI:30616"/>
    </ligand>
</feature>
<feature type="binding site" evidence="1">
    <location>
        <position position="535"/>
    </location>
    <ligand>
        <name>Mg(2+)</name>
        <dbReference type="ChEBI" id="CHEBI:18420"/>
    </ligand>
</feature>
<feature type="binding site" evidence="1">
    <location>
        <position position="537"/>
    </location>
    <ligand>
        <name>Mg(2+)</name>
        <dbReference type="ChEBI" id="CHEBI:18420"/>
    </ligand>
</feature>
<feature type="binding site" evidence="1">
    <location>
        <position position="540"/>
    </location>
    <ligand>
        <name>Mg(2+)</name>
        <dbReference type="ChEBI" id="CHEBI:18420"/>
    </ligand>
</feature>
<feature type="binding site" evidence="1">
    <location>
        <position position="582"/>
    </location>
    <ligand>
        <name>CoA</name>
        <dbReference type="ChEBI" id="CHEBI:57287"/>
    </ligand>
</feature>
<feature type="modified residue" description="N6-acetyllysine" evidence="1">
    <location>
        <position position="607"/>
    </location>
</feature>
<protein>
    <recommendedName>
        <fullName evidence="1">Acetyl-coenzyme A synthetase</fullName>
        <shortName evidence="1">AcCoA synthetase</shortName>
        <shortName evidence="1">Acs</shortName>
        <ecNumber evidence="1">6.2.1.1</ecNumber>
    </recommendedName>
    <alternativeName>
        <fullName evidence="1">Acetate--CoA ligase</fullName>
    </alternativeName>
    <alternativeName>
        <fullName evidence="1">Acyl-activating enzyme</fullName>
    </alternativeName>
</protein>
<proteinExistence type="inferred from homology"/>
<sequence>MSDKVYPVTAEWSKSAYVDAAKYKSMYESSVSEPDKFWGEHGKRIDWVKPYTKVKNTSFDPHNVSIKWFEDGVTNVSTNCIDRHLATLGDQTAIIWEGDDPNESKHITYKQLHEEVCRLANVLKSYGISKGDTVTIYLPMIPEAAYAMLACARIGAIHSIVFGGFSADSLGGRIEGCKSKLIITADEGYRGGRKVPLKVNADAAIKKVDGIVETMIVVRRTGGKVAWTEGRDVWYDEALAKASPDCPAAEMNAEDPLFILFTSGSTGAPKGVVHSTGGYLVWASMTHQYVFDYRPGEVYWCTADVGWVTGHSYIVYGPLANGATTLMFEGVPSYPTISRFWDVVDKHQVNIFYTAPTAIRSLMGAGDGPVKATSRKTLRVLGSVGEPINPEAWEWYYRVVGEERCPIVDTWWQTETGGILISPLPGATALKPGSATQPFFGVQPQVVDAAGEVLEGPCSGNLVIADSWPAQMRTLFNDHERFVQAYFSAYPGKYFTGDGCRRDEDGYYWITGRVDDVINVSGHRLGTAEVESSLVAHIKVAEAAVVGYPHDLKGQGIYAYVTLMTGIEPSEELRKELVSWVRKDIGPIASPDIVHFAPGLPKTRSGKIMRRILRKIAEKEFSALGDTSTLADPSVVDDLIRERAN</sequence>